<feature type="chain" id="PRO_1000016345" description="Histidine--tRNA ligase">
    <location>
        <begin position="1"/>
        <end position="420"/>
    </location>
</feature>
<name>SYH_CLOD6</name>
<gene>
    <name evidence="1" type="primary">hisS</name>
    <name type="ordered locus">CD630_27400</name>
</gene>
<keyword id="KW-0030">Aminoacyl-tRNA synthetase</keyword>
<keyword id="KW-0067">ATP-binding</keyword>
<keyword id="KW-0963">Cytoplasm</keyword>
<keyword id="KW-0436">Ligase</keyword>
<keyword id="KW-0547">Nucleotide-binding</keyword>
<keyword id="KW-0648">Protein biosynthesis</keyword>
<keyword id="KW-1185">Reference proteome</keyword>
<sequence length="420" mass="47737">MLTKAPRGTKDITPKEAYKWRYVENKFREICALYGYEEMVTPIFEHTELFKRSVGDTTDIVQKEMYSFKDKGDREITLKPEGTAGVVRAFIENKLYADTQPTKLFYVTPCFRYERPQAGRQRQFHQFGIEALGSDTPSMDAEIIALAVQFFNEVGLNDLVVSINSVGCPVCRKEYNALLKEYLDSKADILCDTCNERREKNPMRVIDCKNPTCKENIKDIPFIADHLCDDCKSHFDKLQEYLKEMNINFVIDKTIVRGLDYYRKTAFEIISNDIGAQSTVCGGGRYDGLVEQLGGPKGISGIGFGLGIERLLLTLEGNGIEIENPQSTDIFIVTIGEEANTRSFKLLKDLRQNHISADKDHIERSVKAQFKYSDKINSKFTIVIGDDELKNDTATLKNMKTSEQTTVKLSTLVEELKQKL</sequence>
<protein>
    <recommendedName>
        <fullName evidence="1">Histidine--tRNA ligase</fullName>
        <ecNumber evidence="1">6.1.1.21</ecNumber>
    </recommendedName>
    <alternativeName>
        <fullName evidence="1">Histidyl-tRNA synthetase</fullName>
        <shortName evidence="1">HisRS</shortName>
    </alternativeName>
</protein>
<organism>
    <name type="scientific">Clostridioides difficile (strain 630)</name>
    <name type="common">Peptoclostridium difficile</name>
    <dbReference type="NCBI Taxonomy" id="272563"/>
    <lineage>
        <taxon>Bacteria</taxon>
        <taxon>Bacillati</taxon>
        <taxon>Bacillota</taxon>
        <taxon>Clostridia</taxon>
        <taxon>Peptostreptococcales</taxon>
        <taxon>Peptostreptococcaceae</taxon>
        <taxon>Clostridioides</taxon>
    </lineage>
</organism>
<dbReference type="EC" id="6.1.1.21" evidence="1"/>
<dbReference type="EMBL" id="AM180355">
    <property type="protein sequence ID" value="CAJ69627.1"/>
    <property type="molecule type" value="Genomic_DNA"/>
</dbReference>
<dbReference type="RefSeq" id="WP_003422928.1">
    <property type="nucleotide sequence ID" value="NZ_JAUPES010000010.1"/>
</dbReference>
<dbReference type="RefSeq" id="YP_001089252.1">
    <property type="nucleotide sequence ID" value="NC_009089.1"/>
</dbReference>
<dbReference type="SMR" id="Q183H5"/>
<dbReference type="STRING" id="272563.CD630_27400"/>
<dbReference type="EnsemblBacteria" id="CAJ69627">
    <property type="protein sequence ID" value="CAJ69627"/>
    <property type="gene ID" value="CD630_27400"/>
</dbReference>
<dbReference type="GeneID" id="66355148"/>
<dbReference type="KEGG" id="cdf:CD630_27400"/>
<dbReference type="KEGG" id="pdc:CDIF630_03003"/>
<dbReference type="PATRIC" id="fig|272563.120.peg.2887"/>
<dbReference type="eggNOG" id="COG0124">
    <property type="taxonomic scope" value="Bacteria"/>
</dbReference>
<dbReference type="OrthoDB" id="9800814at2"/>
<dbReference type="PhylomeDB" id="Q183H5"/>
<dbReference type="BioCyc" id="PDIF272563:G12WB-2898-MONOMER"/>
<dbReference type="Proteomes" id="UP000001978">
    <property type="component" value="Chromosome"/>
</dbReference>
<dbReference type="GO" id="GO:0005737">
    <property type="term" value="C:cytoplasm"/>
    <property type="evidence" value="ECO:0007669"/>
    <property type="project" value="UniProtKB-SubCell"/>
</dbReference>
<dbReference type="GO" id="GO:0005524">
    <property type="term" value="F:ATP binding"/>
    <property type="evidence" value="ECO:0007669"/>
    <property type="project" value="UniProtKB-UniRule"/>
</dbReference>
<dbReference type="GO" id="GO:0140096">
    <property type="term" value="F:catalytic activity, acting on a protein"/>
    <property type="evidence" value="ECO:0007669"/>
    <property type="project" value="UniProtKB-ARBA"/>
</dbReference>
<dbReference type="GO" id="GO:0004821">
    <property type="term" value="F:histidine-tRNA ligase activity"/>
    <property type="evidence" value="ECO:0007669"/>
    <property type="project" value="UniProtKB-UniRule"/>
</dbReference>
<dbReference type="GO" id="GO:0016740">
    <property type="term" value="F:transferase activity"/>
    <property type="evidence" value="ECO:0007669"/>
    <property type="project" value="UniProtKB-ARBA"/>
</dbReference>
<dbReference type="GO" id="GO:0006427">
    <property type="term" value="P:histidyl-tRNA aminoacylation"/>
    <property type="evidence" value="ECO:0007669"/>
    <property type="project" value="UniProtKB-UniRule"/>
</dbReference>
<dbReference type="CDD" id="cd00773">
    <property type="entry name" value="HisRS-like_core"/>
    <property type="match status" value="1"/>
</dbReference>
<dbReference type="CDD" id="cd00859">
    <property type="entry name" value="HisRS_anticodon"/>
    <property type="match status" value="1"/>
</dbReference>
<dbReference type="FunFam" id="3.30.930.10:FF:000005">
    <property type="entry name" value="Histidine--tRNA ligase"/>
    <property type="match status" value="1"/>
</dbReference>
<dbReference type="Gene3D" id="3.40.50.800">
    <property type="entry name" value="Anticodon-binding domain"/>
    <property type="match status" value="1"/>
</dbReference>
<dbReference type="Gene3D" id="3.30.930.10">
    <property type="entry name" value="Bira Bifunctional Protein, Domain 2"/>
    <property type="match status" value="1"/>
</dbReference>
<dbReference type="HAMAP" id="MF_00127">
    <property type="entry name" value="His_tRNA_synth"/>
    <property type="match status" value="1"/>
</dbReference>
<dbReference type="InterPro" id="IPR006195">
    <property type="entry name" value="aa-tRNA-synth_II"/>
</dbReference>
<dbReference type="InterPro" id="IPR045864">
    <property type="entry name" value="aa-tRNA-synth_II/BPL/LPL"/>
</dbReference>
<dbReference type="InterPro" id="IPR004154">
    <property type="entry name" value="Anticodon-bd"/>
</dbReference>
<dbReference type="InterPro" id="IPR036621">
    <property type="entry name" value="Anticodon-bd_dom_sf"/>
</dbReference>
<dbReference type="InterPro" id="IPR015807">
    <property type="entry name" value="His-tRNA-ligase"/>
</dbReference>
<dbReference type="InterPro" id="IPR041715">
    <property type="entry name" value="HisRS-like_core"/>
</dbReference>
<dbReference type="InterPro" id="IPR004516">
    <property type="entry name" value="HisRS/HisZ"/>
</dbReference>
<dbReference type="InterPro" id="IPR033656">
    <property type="entry name" value="HisRS_anticodon"/>
</dbReference>
<dbReference type="NCBIfam" id="TIGR00442">
    <property type="entry name" value="hisS"/>
    <property type="match status" value="1"/>
</dbReference>
<dbReference type="PANTHER" id="PTHR43707:SF1">
    <property type="entry name" value="HISTIDINE--TRNA LIGASE, MITOCHONDRIAL-RELATED"/>
    <property type="match status" value="1"/>
</dbReference>
<dbReference type="PANTHER" id="PTHR43707">
    <property type="entry name" value="HISTIDYL-TRNA SYNTHETASE"/>
    <property type="match status" value="1"/>
</dbReference>
<dbReference type="Pfam" id="PF03129">
    <property type="entry name" value="HGTP_anticodon"/>
    <property type="match status" value="1"/>
</dbReference>
<dbReference type="Pfam" id="PF13393">
    <property type="entry name" value="tRNA-synt_His"/>
    <property type="match status" value="1"/>
</dbReference>
<dbReference type="PIRSF" id="PIRSF001549">
    <property type="entry name" value="His-tRNA_synth"/>
    <property type="match status" value="1"/>
</dbReference>
<dbReference type="SUPFAM" id="SSF52954">
    <property type="entry name" value="Class II aaRS ABD-related"/>
    <property type="match status" value="1"/>
</dbReference>
<dbReference type="SUPFAM" id="SSF55681">
    <property type="entry name" value="Class II aaRS and biotin synthetases"/>
    <property type="match status" value="1"/>
</dbReference>
<dbReference type="PROSITE" id="PS50862">
    <property type="entry name" value="AA_TRNA_LIGASE_II"/>
    <property type="match status" value="1"/>
</dbReference>
<accession>Q183H5</accession>
<proteinExistence type="inferred from homology"/>
<reference key="1">
    <citation type="journal article" date="2006" name="Nat. Genet.">
        <title>The multidrug-resistant human pathogen Clostridium difficile has a highly mobile, mosaic genome.</title>
        <authorList>
            <person name="Sebaihia M."/>
            <person name="Wren B.W."/>
            <person name="Mullany P."/>
            <person name="Fairweather N.F."/>
            <person name="Minton N."/>
            <person name="Stabler R."/>
            <person name="Thomson N.R."/>
            <person name="Roberts A.P."/>
            <person name="Cerdeno-Tarraga A.M."/>
            <person name="Wang H."/>
            <person name="Holden M.T.G."/>
            <person name="Wright A."/>
            <person name="Churcher C."/>
            <person name="Quail M.A."/>
            <person name="Baker S."/>
            <person name="Bason N."/>
            <person name="Brooks K."/>
            <person name="Chillingworth T."/>
            <person name="Cronin A."/>
            <person name="Davis P."/>
            <person name="Dowd L."/>
            <person name="Fraser A."/>
            <person name="Feltwell T."/>
            <person name="Hance Z."/>
            <person name="Holroyd S."/>
            <person name="Jagels K."/>
            <person name="Moule S."/>
            <person name="Mungall K."/>
            <person name="Price C."/>
            <person name="Rabbinowitsch E."/>
            <person name="Sharp S."/>
            <person name="Simmonds M."/>
            <person name="Stevens K."/>
            <person name="Unwin L."/>
            <person name="Whithead S."/>
            <person name="Dupuy B."/>
            <person name="Dougan G."/>
            <person name="Barrell B."/>
            <person name="Parkhill J."/>
        </authorList>
    </citation>
    <scope>NUCLEOTIDE SEQUENCE [LARGE SCALE GENOMIC DNA]</scope>
    <source>
        <strain>630</strain>
    </source>
</reference>
<evidence type="ECO:0000255" key="1">
    <source>
        <dbReference type="HAMAP-Rule" id="MF_00127"/>
    </source>
</evidence>
<comment type="catalytic activity">
    <reaction evidence="1">
        <text>tRNA(His) + L-histidine + ATP = L-histidyl-tRNA(His) + AMP + diphosphate + H(+)</text>
        <dbReference type="Rhea" id="RHEA:17313"/>
        <dbReference type="Rhea" id="RHEA-COMP:9665"/>
        <dbReference type="Rhea" id="RHEA-COMP:9689"/>
        <dbReference type="ChEBI" id="CHEBI:15378"/>
        <dbReference type="ChEBI" id="CHEBI:30616"/>
        <dbReference type="ChEBI" id="CHEBI:33019"/>
        <dbReference type="ChEBI" id="CHEBI:57595"/>
        <dbReference type="ChEBI" id="CHEBI:78442"/>
        <dbReference type="ChEBI" id="CHEBI:78527"/>
        <dbReference type="ChEBI" id="CHEBI:456215"/>
        <dbReference type="EC" id="6.1.1.21"/>
    </reaction>
</comment>
<comment type="subunit">
    <text evidence="1">Homodimer.</text>
</comment>
<comment type="subcellular location">
    <subcellularLocation>
        <location evidence="1">Cytoplasm</location>
    </subcellularLocation>
</comment>
<comment type="similarity">
    <text evidence="1">Belongs to the class-II aminoacyl-tRNA synthetase family.</text>
</comment>